<reference key="1">
    <citation type="journal article" date="2010" name="PLoS ONE">
        <title>Genome sequence of Cronobacter sakazakii BAA-894 and comparative genomic hybridization analysis with other Cronobacter species.</title>
        <authorList>
            <person name="Kucerova E."/>
            <person name="Clifton S.W."/>
            <person name="Xia X.Q."/>
            <person name="Long F."/>
            <person name="Porwollik S."/>
            <person name="Fulton L."/>
            <person name="Fronick C."/>
            <person name="Minx P."/>
            <person name="Kyung K."/>
            <person name="Warren W."/>
            <person name="Fulton R."/>
            <person name="Feng D."/>
            <person name="Wollam A."/>
            <person name="Shah N."/>
            <person name="Bhonagiri V."/>
            <person name="Nash W.E."/>
            <person name="Hallsworth-Pepin K."/>
            <person name="Wilson R.K."/>
            <person name="McClelland M."/>
            <person name="Forsythe S.J."/>
        </authorList>
    </citation>
    <scope>NUCLEOTIDE SEQUENCE [LARGE SCALE GENOMIC DNA]</scope>
    <source>
        <strain>ATCC BAA-894</strain>
    </source>
</reference>
<name>PURA_CROS8</name>
<keyword id="KW-0963">Cytoplasm</keyword>
<keyword id="KW-0342">GTP-binding</keyword>
<keyword id="KW-0436">Ligase</keyword>
<keyword id="KW-0460">Magnesium</keyword>
<keyword id="KW-0479">Metal-binding</keyword>
<keyword id="KW-0547">Nucleotide-binding</keyword>
<keyword id="KW-0658">Purine biosynthesis</keyword>
<keyword id="KW-1185">Reference proteome</keyword>
<gene>
    <name evidence="1" type="primary">purA</name>
    <name type="ordered locus">ESA_00187</name>
</gene>
<proteinExistence type="inferred from homology"/>
<comment type="function">
    <text evidence="1">Plays an important role in the de novo pathway of purine nucleotide biosynthesis. Catalyzes the first committed step in the biosynthesis of AMP from IMP.</text>
</comment>
<comment type="catalytic activity">
    <reaction evidence="1">
        <text>IMP + L-aspartate + GTP = N(6)-(1,2-dicarboxyethyl)-AMP + GDP + phosphate + 2 H(+)</text>
        <dbReference type="Rhea" id="RHEA:15753"/>
        <dbReference type="ChEBI" id="CHEBI:15378"/>
        <dbReference type="ChEBI" id="CHEBI:29991"/>
        <dbReference type="ChEBI" id="CHEBI:37565"/>
        <dbReference type="ChEBI" id="CHEBI:43474"/>
        <dbReference type="ChEBI" id="CHEBI:57567"/>
        <dbReference type="ChEBI" id="CHEBI:58053"/>
        <dbReference type="ChEBI" id="CHEBI:58189"/>
        <dbReference type="EC" id="6.3.4.4"/>
    </reaction>
</comment>
<comment type="cofactor">
    <cofactor evidence="1">
        <name>Mg(2+)</name>
        <dbReference type="ChEBI" id="CHEBI:18420"/>
    </cofactor>
    <text evidence="1">Binds 1 Mg(2+) ion per subunit.</text>
</comment>
<comment type="pathway">
    <text evidence="1">Purine metabolism; AMP biosynthesis via de novo pathway; AMP from IMP: step 1/2.</text>
</comment>
<comment type="subunit">
    <text evidence="1">Homodimer.</text>
</comment>
<comment type="subcellular location">
    <subcellularLocation>
        <location evidence="1">Cytoplasm</location>
    </subcellularLocation>
</comment>
<comment type="similarity">
    <text evidence="1">Belongs to the adenylosuccinate synthetase family.</text>
</comment>
<evidence type="ECO:0000255" key="1">
    <source>
        <dbReference type="HAMAP-Rule" id="MF_00011"/>
    </source>
</evidence>
<sequence>MGNNVVVLGTQWGDEGKGKIVDLLTERAKYVVRYQGGHNAGHTLVINGEKTVLHLIPSGILRDNVTSIIGNGVVLSPAALMKEMKELEDRGIPVRERLLLSEACPLILDYHVALDVAREKARGAKAIGTTGRGIGPAYEDKVARRGLRVGDLFDKATFAEKLKEVLEYHNFQLVNFYKVEAVDYQKVLDDVMAIADVLTSMVVDVSDLLDQARKRGDFIMFEGAQGTLLDIDHGTYPYVTSSNTTAGGVATGSGIGPRYVDYVLGIIKAYSTRVGAGPFPTELFDDIGEFLCKKGNEFGATTGRRRRTGWLDAVAVRRAVQINSLSGFCLTKLDVLDGLEEVKICVAYRMPDGREVTTTPMAADDWEGIEPIYETMPGWSESTFGVKERSGLPQAALNYIKRIEEVTGVPIDIISTGPDRTETMILRDPFDA</sequence>
<organism>
    <name type="scientific">Cronobacter sakazakii (strain ATCC BAA-894)</name>
    <name type="common">Enterobacter sakazakii</name>
    <dbReference type="NCBI Taxonomy" id="290339"/>
    <lineage>
        <taxon>Bacteria</taxon>
        <taxon>Pseudomonadati</taxon>
        <taxon>Pseudomonadota</taxon>
        <taxon>Gammaproteobacteria</taxon>
        <taxon>Enterobacterales</taxon>
        <taxon>Enterobacteriaceae</taxon>
        <taxon>Cronobacter</taxon>
    </lineage>
</organism>
<dbReference type="EC" id="6.3.4.4" evidence="1"/>
<dbReference type="EMBL" id="CP000783">
    <property type="protein sequence ID" value="ABU75488.1"/>
    <property type="molecule type" value="Genomic_DNA"/>
</dbReference>
<dbReference type="RefSeq" id="WP_012123689.1">
    <property type="nucleotide sequence ID" value="NC_009778.1"/>
</dbReference>
<dbReference type="SMR" id="A7MM94"/>
<dbReference type="KEGG" id="esa:ESA_00187"/>
<dbReference type="PATRIC" id="fig|290339.8.peg.165"/>
<dbReference type="HOGENOM" id="CLU_029848_0_0_6"/>
<dbReference type="UniPathway" id="UPA00075">
    <property type="reaction ID" value="UER00335"/>
</dbReference>
<dbReference type="Proteomes" id="UP000000260">
    <property type="component" value="Chromosome"/>
</dbReference>
<dbReference type="GO" id="GO:0005737">
    <property type="term" value="C:cytoplasm"/>
    <property type="evidence" value="ECO:0007669"/>
    <property type="project" value="UniProtKB-SubCell"/>
</dbReference>
<dbReference type="GO" id="GO:0004019">
    <property type="term" value="F:adenylosuccinate synthase activity"/>
    <property type="evidence" value="ECO:0007669"/>
    <property type="project" value="UniProtKB-UniRule"/>
</dbReference>
<dbReference type="GO" id="GO:0005525">
    <property type="term" value="F:GTP binding"/>
    <property type="evidence" value="ECO:0007669"/>
    <property type="project" value="UniProtKB-UniRule"/>
</dbReference>
<dbReference type="GO" id="GO:0000287">
    <property type="term" value="F:magnesium ion binding"/>
    <property type="evidence" value="ECO:0007669"/>
    <property type="project" value="UniProtKB-UniRule"/>
</dbReference>
<dbReference type="GO" id="GO:0044208">
    <property type="term" value="P:'de novo' AMP biosynthetic process"/>
    <property type="evidence" value="ECO:0007669"/>
    <property type="project" value="UniProtKB-UniRule"/>
</dbReference>
<dbReference type="GO" id="GO:0046040">
    <property type="term" value="P:IMP metabolic process"/>
    <property type="evidence" value="ECO:0007669"/>
    <property type="project" value="TreeGrafter"/>
</dbReference>
<dbReference type="CDD" id="cd03108">
    <property type="entry name" value="AdSS"/>
    <property type="match status" value="1"/>
</dbReference>
<dbReference type="FunFam" id="1.10.300.10:FF:000001">
    <property type="entry name" value="Adenylosuccinate synthetase"/>
    <property type="match status" value="1"/>
</dbReference>
<dbReference type="FunFam" id="3.90.170.10:FF:000001">
    <property type="entry name" value="Adenylosuccinate synthetase"/>
    <property type="match status" value="1"/>
</dbReference>
<dbReference type="Gene3D" id="3.40.440.10">
    <property type="entry name" value="Adenylosuccinate Synthetase, subunit A, domain 1"/>
    <property type="match status" value="1"/>
</dbReference>
<dbReference type="Gene3D" id="1.10.300.10">
    <property type="entry name" value="Adenylosuccinate Synthetase, subunit A, domain 2"/>
    <property type="match status" value="1"/>
</dbReference>
<dbReference type="Gene3D" id="3.90.170.10">
    <property type="entry name" value="Adenylosuccinate Synthetase, subunit A, domain 3"/>
    <property type="match status" value="1"/>
</dbReference>
<dbReference type="HAMAP" id="MF_00011">
    <property type="entry name" value="Adenylosucc_synth"/>
    <property type="match status" value="1"/>
</dbReference>
<dbReference type="InterPro" id="IPR018220">
    <property type="entry name" value="Adenylosuccin_syn_GTP-bd"/>
</dbReference>
<dbReference type="InterPro" id="IPR033128">
    <property type="entry name" value="Adenylosuccin_syn_Lys_AS"/>
</dbReference>
<dbReference type="InterPro" id="IPR042109">
    <property type="entry name" value="Adenylosuccinate_synth_dom1"/>
</dbReference>
<dbReference type="InterPro" id="IPR042110">
    <property type="entry name" value="Adenylosuccinate_synth_dom2"/>
</dbReference>
<dbReference type="InterPro" id="IPR042111">
    <property type="entry name" value="Adenylosuccinate_synth_dom3"/>
</dbReference>
<dbReference type="InterPro" id="IPR001114">
    <property type="entry name" value="Adenylosuccinate_synthetase"/>
</dbReference>
<dbReference type="InterPro" id="IPR027417">
    <property type="entry name" value="P-loop_NTPase"/>
</dbReference>
<dbReference type="NCBIfam" id="NF002223">
    <property type="entry name" value="PRK01117.1"/>
    <property type="match status" value="1"/>
</dbReference>
<dbReference type="NCBIfam" id="TIGR00184">
    <property type="entry name" value="purA"/>
    <property type="match status" value="1"/>
</dbReference>
<dbReference type="PANTHER" id="PTHR11846">
    <property type="entry name" value="ADENYLOSUCCINATE SYNTHETASE"/>
    <property type="match status" value="1"/>
</dbReference>
<dbReference type="PANTHER" id="PTHR11846:SF0">
    <property type="entry name" value="ADENYLOSUCCINATE SYNTHETASE"/>
    <property type="match status" value="1"/>
</dbReference>
<dbReference type="Pfam" id="PF00709">
    <property type="entry name" value="Adenylsucc_synt"/>
    <property type="match status" value="1"/>
</dbReference>
<dbReference type="SMART" id="SM00788">
    <property type="entry name" value="Adenylsucc_synt"/>
    <property type="match status" value="1"/>
</dbReference>
<dbReference type="SUPFAM" id="SSF52540">
    <property type="entry name" value="P-loop containing nucleoside triphosphate hydrolases"/>
    <property type="match status" value="1"/>
</dbReference>
<dbReference type="PROSITE" id="PS01266">
    <property type="entry name" value="ADENYLOSUCCIN_SYN_1"/>
    <property type="match status" value="1"/>
</dbReference>
<dbReference type="PROSITE" id="PS00513">
    <property type="entry name" value="ADENYLOSUCCIN_SYN_2"/>
    <property type="match status" value="1"/>
</dbReference>
<accession>A7MM94</accession>
<feature type="chain" id="PRO_1000000817" description="Adenylosuccinate synthetase">
    <location>
        <begin position="1"/>
        <end position="432"/>
    </location>
</feature>
<feature type="active site" description="Proton acceptor" evidence="1">
    <location>
        <position position="14"/>
    </location>
</feature>
<feature type="active site" description="Proton donor" evidence="1">
    <location>
        <position position="42"/>
    </location>
</feature>
<feature type="binding site" evidence="1">
    <location>
        <begin position="13"/>
        <end position="19"/>
    </location>
    <ligand>
        <name>GTP</name>
        <dbReference type="ChEBI" id="CHEBI:37565"/>
    </ligand>
</feature>
<feature type="binding site" description="in other chain" evidence="1">
    <location>
        <begin position="14"/>
        <end position="17"/>
    </location>
    <ligand>
        <name>IMP</name>
        <dbReference type="ChEBI" id="CHEBI:58053"/>
        <note>ligand shared between dimeric partners</note>
    </ligand>
</feature>
<feature type="binding site" evidence="1">
    <location>
        <position position="14"/>
    </location>
    <ligand>
        <name>Mg(2+)</name>
        <dbReference type="ChEBI" id="CHEBI:18420"/>
    </ligand>
</feature>
<feature type="binding site" description="in other chain" evidence="1">
    <location>
        <begin position="39"/>
        <end position="42"/>
    </location>
    <ligand>
        <name>IMP</name>
        <dbReference type="ChEBI" id="CHEBI:58053"/>
        <note>ligand shared between dimeric partners</note>
    </ligand>
</feature>
<feature type="binding site" evidence="1">
    <location>
        <begin position="41"/>
        <end position="43"/>
    </location>
    <ligand>
        <name>GTP</name>
        <dbReference type="ChEBI" id="CHEBI:37565"/>
    </ligand>
</feature>
<feature type="binding site" evidence="1">
    <location>
        <position position="41"/>
    </location>
    <ligand>
        <name>Mg(2+)</name>
        <dbReference type="ChEBI" id="CHEBI:18420"/>
    </ligand>
</feature>
<feature type="binding site" description="in other chain" evidence="1">
    <location>
        <position position="130"/>
    </location>
    <ligand>
        <name>IMP</name>
        <dbReference type="ChEBI" id="CHEBI:58053"/>
        <note>ligand shared between dimeric partners</note>
    </ligand>
</feature>
<feature type="binding site" evidence="1">
    <location>
        <position position="144"/>
    </location>
    <ligand>
        <name>IMP</name>
        <dbReference type="ChEBI" id="CHEBI:58053"/>
        <note>ligand shared between dimeric partners</note>
    </ligand>
</feature>
<feature type="binding site" description="in other chain" evidence="1">
    <location>
        <position position="225"/>
    </location>
    <ligand>
        <name>IMP</name>
        <dbReference type="ChEBI" id="CHEBI:58053"/>
        <note>ligand shared between dimeric partners</note>
    </ligand>
</feature>
<feature type="binding site" description="in other chain" evidence="1">
    <location>
        <position position="240"/>
    </location>
    <ligand>
        <name>IMP</name>
        <dbReference type="ChEBI" id="CHEBI:58053"/>
        <note>ligand shared between dimeric partners</note>
    </ligand>
</feature>
<feature type="binding site" evidence="1">
    <location>
        <begin position="300"/>
        <end position="306"/>
    </location>
    <ligand>
        <name>substrate</name>
    </ligand>
</feature>
<feature type="binding site" description="in other chain" evidence="1">
    <location>
        <position position="304"/>
    </location>
    <ligand>
        <name>IMP</name>
        <dbReference type="ChEBI" id="CHEBI:58053"/>
        <note>ligand shared between dimeric partners</note>
    </ligand>
</feature>
<feature type="binding site" evidence="1">
    <location>
        <position position="306"/>
    </location>
    <ligand>
        <name>GTP</name>
        <dbReference type="ChEBI" id="CHEBI:37565"/>
    </ligand>
</feature>
<feature type="binding site" evidence="1">
    <location>
        <begin position="332"/>
        <end position="334"/>
    </location>
    <ligand>
        <name>GTP</name>
        <dbReference type="ChEBI" id="CHEBI:37565"/>
    </ligand>
</feature>
<feature type="binding site" evidence="1">
    <location>
        <begin position="415"/>
        <end position="417"/>
    </location>
    <ligand>
        <name>GTP</name>
        <dbReference type="ChEBI" id="CHEBI:37565"/>
    </ligand>
</feature>
<protein>
    <recommendedName>
        <fullName evidence="1">Adenylosuccinate synthetase</fullName>
        <shortName evidence="1">AMPSase</shortName>
        <shortName evidence="1">AdSS</shortName>
        <ecNumber evidence="1">6.3.4.4</ecNumber>
    </recommendedName>
    <alternativeName>
        <fullName evidence="1">IMP--aspartate ligase</fullName>
    </alternativeName>
</protein>